<keyword id="KW-0021">Allosteric enzyme</keyword>
<keyword id="KW-0289">Folate biosynthesis</keyword>
<keyword id="KW-0342">GTP-binding</keyword>
<keyword id="KW-0378">Hydrolase</keyword>
<keyword id="KW-0479">Metal-binding</keyword>
<keyword id="KW-0547">Nucleotide-binding</keyword>
<keyword id="KW-0597">Phosphoprotein</keyword>
<keyword id="KW-1185">Reference proteome</keyword>
<keyword id="KW-0862">Zinc</keyword>
<dbReference type="EC" id="3.5.4.16"/>
<dbReference type="EMBL" id="CU329670">
    <property type="protein sequence ID" value="CAB11513.1"/>
    <property type="molecule type" value="Genomic_DNA"/>
</dbReference>
<dbReference type="PIR" id="T37828">
    <property type="entry name" value="T37828"/>
</dbReference>
<dbReference type="SMR" id="O13774"/>
<dbReference type="BioGRID" id="278870">
    <property type="interactions" value="4"/>
</dbReference>
<dbReference type="FunCoup" id="O13774">
    <property type="interactions" value="427"/>
</dbReference>
<dbReference type="STRING" id="284812.O13774"/>
<dbReference type="iPTMnet" id="O13774"/>
<dbReference type="PaxDb" id="4896-SPAC17A5.13.1"/>
<dbReference type="EnsemblFungi" id="SPAC17A5.13.1">
    <property type="protein sequence ID" value="SPAC17A5.13.1:pep"/>
    <property type="gene ID" value="SPAC17A5.13"/>
</dbReference>
<dbReference type="KEGG" id="spo:2542406"/>
<dbReference type="PomBase" id="SPAC17A5.13"/>
<dbReference type="VEuPathDB" id="FungiDB:SPAC17A5.13"/>
<dbReference type="eggNOG" id="KOG2698">
    <property type="taxonomic scope" value="Eukaryota"/>
</dbReference>
<dbReference type="HOGENOM" id="CLU_049768_2_2_1"/>
<dbReference type="InParanoid" id="O13774"/>
<dbReference type="OMA" id="HFACRPQ"/>
<dbReference type="PhylomeDB" id="O13774"/>
<dbReference type="Reactome" id="R-SPO-1474151">
    <property type="pathway name" value="Tetrahydrobiopterin (BH4) synthesis, recycling, salvage and regulation"/>
</dbReference>
<dbReference type="UniPathway" id="UPA00848">
    <property type="reaction ID" value="UER00151"/>
</dbReference>
<dbReference type="PRO" id="PR:O13774"/>
<dbReference type="Proteomes" id="UP000002485">
    <property type="component" value="Chromosome I"/>
</dbReference>
<dbReference type="GO" id="GO:0005737">
    <property type="term" value="C:cytoplasm"/>
    <property type="evidence" value="ECO:0000318"/>
    <property type="project" value="GO_Central"/>
</dbReference>
<dbReference type="GO" id="GO:0005829">
    <property type="term" value="C:cytosol"/>
    <property type="evidence" value="ECO:0007005"/>
    <property type="project" value="PomBase"/>
</dbReference>
<dbReference type="GO" id="GO:0005634">
    <property type="term" value="C:nucleus"/>
    <property type="evidence" value="ECO:0007005"/>
    <property type="project" value="PomBase"/>
</dbReference>
<dbReference type="GO" id="GO:0005525">
    <property type="term" value="F:GTP binding"/>
    <property type="evidence" value="ECO:0000318"/>
    <property type="project" value="GO_Central"/>
</dbReference>
<dbReference type="GO" id="GO:0003934">
    <property type="term" value="F:GTP cyclohydrolase I activity"/>
    <property type="evidence" value="ECO:0000318"/>
    <property type="project" value="GO_Central"/>
</dbReference>
<dbReference type="GO" id="GO:0008270">
    <property type="term" value="F:zinc ion binding"/>
    <property type="evidence" value="ECO:0000318"/>
    <property type="project" value="GO_Central"/>
</dbReference>
<dbReference type="GO" id="GO:0046656">
    <property type="term" value="P:folic acid biosynthetic process"/>
    <property type="evidence" value="ECO:0000305"/>
    <property type="project" value="PomBase"/>
</dbReference>
<dbReference type="GO" id="GO:0006729">
    <property type="term" value="P:tetrahydrobiopterin biosynthetic process"/>
    <property type="evidence" value="ECO:0000318"/>
    <property type="project" value="GO_Central"/>
</dbReference>
<dbReference type="GO" id="GO:0046654">
    <property type="term" value="P:tetrahydrofolate biosynthetic process"/>
    <property type="evidence" value="ECO:0007669"/>
    <property type="project" value="InterPro"/>
</dbReference>
<dbReference type="CDD" id="cd00642">
    <property type="entry name" value="GTP_cyclohydro1"/>
    <property type="match status" value="1"/>
</dbReference>
<dbReference type="FunFam" id="1.10.286.10:FF:000003">
    <property type="entry name" value="GTP cyclohydrolase 1"/>
    <property type="match status" value="1"/>
</dbReference>
<dbReference type="FunFam" id="3.30.1130.10:FF:000012">
    <property type="entry name" value="GTP cyclohydrolase 1"/>
    <property type="match status" value="1"/>
</dbReference>
<dbReference type="Gene3D" id="1.10.286.10">
    <property type="match status" value="1"/>
</dbReference>
<dbReference type="Gene3D" id="3.30.1130.10">
    <property type="match status" value="1"/>
</dbReference>
<dbReference type="HAMAP" id="MF_00223">
    <property type="entry name" value="FolE"/>
    <property type="match status" value="1"/>
</dbReference>
<dbReference type="InterPro" id="IPR043133">
    <property type="entry name" value="GTP-CH-I_C/QueF"/>
</dbReference>
<dbReference type="InterPro" id="IPR043134">
    <property type="entry name" value="GTP-CH-I_N"/>
</dbReference>
<dbReference type="InterPro" id="IPR001474">
    <property type="entry name" value="GTP_CycHdrlase_I"/>
</dbReference>
<dbReference type="InterPro" id="IPR018234">
    <property type="entry name" value="GTP_CycHdrlase_I_CS"/>
</dbReference>
<dbReference type="InterPro" id="IPR020602">
    <property type="entry name" value="GTP_CycHdrlase_I_dom"/>
</dbReference>
<dbReference type="NCBIfam" id="TIGR00063">
    <property type="entry name" value="folE"/>
    <property type="match status" value="1"/>
</dbReference>
<dbReference type="NCBIfam" id="NF006825">
    <property type="entry name" value="PRK09347.1-2"/>
    <property type="match status" value="1"/>
</dbReference>
<dbReference type="NCBIfam" id="NF006826">
    <property type="entry name" value="PRK09347.1-3"/>
    <property type="match status" value="1"/>
</dbReference>
<dbReference type="PANTHER" id="PTHR11109:SF7">
    <property type="entry name" value="GTP CYCLOHYDROLASE 1"/>
    <property type="match status" value="1"/>
</dbReference>
<dbReference type="PANTHER" id="PTHR11109">
    <property type="entry name" value="GTP CYCLOHYDROLASE I"/>
    <property type="match status" value="1"/>
</dbReference>
<dbReference type="Pfam" id="PF01227">
    <property type="entry name" value="GTP_cyclohydroI"/>
    <property type="match status" value="1"/>
</dbReference>
<dbReference type="SUPFAM" id="SSF55620">
    <property type="entry name" value="Tetrahydrobiopterin biosynthesis enzymes-like"/>
    <property type="match status" value="1"/>
</dbReference>
<dbReference type="PROSITE" id="PS00859">
    <property type="entry name" value="GTP_CYCLOHYDROL_1_1"/>
    <property type="match status" value="1"/>
</dbReference>
<dbReference type="PROSITE" id="PS00860">
    <property type="entry name" value="GTP_CYCLOHYDROL_1_2"/>
    <property type="match status" value="1"/>
</dbReference>
<organism>
    <name type="scientific">Schizosaccharomyces pombe (strain 972 / ATCC 24843)</name>
    <name type="common">Fission yeast</name>
    <dbReference type="NCBI Taxonomy" id="284812"/>
    <lineage>
        <taxon>Eukaryota</taxon>
        <taxon>Fungi</taxon>
        <taxon>Dikarya</taxon>
        <taxon>Ascomycota</taxon>
        <taxon>Taphrinomycotina</taxon>
        <taxon>Schizosaccharomycetes</taxon>
        <taxon>Schizosaccharomycetales</taxon>
        <taxon>Schizosaccharomycetaceae</taxon>
        <taxon>Schizosaccharomyces</taxon>
    </lineage>
</organism>
<accession>O13774</accession>
<proteinExistence type="evidence at protein level"/>
<comment type="function">
    <text>GTP cyclohydrolase 1 is the first enzyme in the biosynthetic pathway leading to folic acid.</text>
</comment>
<comment type="catalytic activity">
    <reaction>
        <text>GTP + H2O = 7,8-dihydroneopterin 3'-triphosphate + formate + H(+)</text>
        <dbReference type="Rhea" id="RHEA:17473"/>
        <dbReference type="ChEBI" id="CHEBI:15377"/>
        <dbReference type="ChEBI" id="CHEBI:15378"/>
        <dbReference type="ChEBI" id="CHEBI:15740"/>
        <dbReference type="ChEBI" id="CHEBI:37565"/>
        <dbReference type="ChEBI" id="CHEBI:58462"/>
        <dbReference type="EC" id="3.5.4.16"/>
    </reaction>
</comment>
<comment type="activity regulation">
    <text evidence="1">GTP shows a positive allosteric effect, and tetrahydrobiopterin inhibits the enzyme activity.</text>
</comment>
<comment type="pathway">
    <text>Cofactor biosynthesis; 7,8-dihydroneopterin triphosphate biosynthesis; 7,8-dihydroneopterin triphosphate from GTP: step 1/1.</text>
</comment>
<comment type="subunit">
    <text evidence="1">Toroid-shaped homodecamer, composed of two pentamers of five dimers.</text>
</comment>
<comment type="similarity">
    <text evidence="4">Belongs to the GTP cyclohydrolase I family.</text>
</comment>
<gene>
    <name type="ORF">SPAC17A5.13</name>
</gene>
<evidence type="ECO:0000250" key="1"/>
<evidence type="ECO:0000256" key="2">
    <source>
        <dbReference type="SAM" id="MobiDB-lite"/>
    </source>
</evidence>
<evidence type="ECO:0000269" key="3">
    <source>
    </source>
</evidence>
<evidence type="ECO:0000305" key="4"/>
<protein>
    <recommendedName>
        <fullName>GTP cyclohydrolase 1</fullName>
        <ecNumber>3.5.4.16</ecNumber>
    </recommendedName>
    <alternativeName>
        <fullName>GTP cyclohydrolase I</fullName>
        <shortName>GTP-CH-I</shortName>
    </alternativeName>
</protein>
<sequence length="235" mass="26493">MEPGKKDYIDSPLRMQPASLSGASTPTIDLDGLSWPCQGTQRRIDTAEEEKVKKISNAISTILECLGEDPERQGLLGTPERYAKAMLYFTKGYEQNLTEVINEAVFQEDHEEMVIVRDIDVFSLCEHHLVPFIGKIHIGYIPRKRVLGLSKLARIANMFSRRLQVQERLTKQVAQAIQAVLKPQGVAVVMEATHMCMVMRGVEKPGSSTVTSSLTGIFQRSHKTREEFFRLIGKF</sequence>
<reference key="1">
    <citation type="journal article" date="2002" name="Nature">
        <title>The genome sequence of Schizosaccharomyces pombe.</title>
        <authorList>
            <person name="Wood V."/>
            <person name="Gwilliam R."/>
            <person name="Rajandream M.A."/>
            <person name="Lyne M.H."/>
            <person name="Lyne R."/>
            <person name="Stewart A."/>
            <person name="Sgouros J.G."/>
            <person name="Peat N."/>
            <person name="Hayles J."/>
            <person name="Baker S.G."/>
            <person name="Basham D."/>
            <person name="Bowman S."/>
            <person name="Brooks K."/>
            <person name="Brown D."/>
            <person name="Brown S."/>
            <person name="Chillingworth T."/>
            <person name="Churcher C.M."/>
            <person name="Collins M."/>
            <person name="Connor R."/>
            <person name="Cronin A."/>
            <person name="Davis P."/>
            <person name="Feltwell T."/>
            <person name="Fraser A."/>
            <person name="Gentles S."/>
            <person name="Goble A."/>
            <person name="Hamlin N."/>
            <person name="Harris D.E."/>
            <person name="Hidalgo J."/>
            <person name="Hodgson G."/>
            <person name="Holroyd S."/>
            <person name="Hornsby T."/>
            <person name="Howarth S."/>
            <person name="Huckle E.J."/>
            <person name="Hunt S."/>
            <person name="Jagels K."/>
            <person name="James K.D."/>
            <person name="Jones L."/>
            <person name="Jones M."/>
            <person name="Leather S."/>
            <person name="McDonald S."/>
            <person name="McLean J."/>
            <person name="Mooney P."/>
            <person name="Moule S."/>
            <person name="Mungall K.L."/>
            <person name="Murphy L.D."/>
            <person name="Niblett D."/>
            <person name="Odell C."/>
            <person name="Oliver K."/>
            <person name="O'Neil S."/>
            <person name="Pearson D."/>
            <person name="Quail M.A."/>
            <person name="Rabbinowitsch E."/>
            <person name="Rutherford K.M."/>
            <person name="Rutter S."/>
            <person name="Saunders D."/>
            <person name="Seeger K."/>
            <person name="Sharp S."/>
            <person name="Skelton J."/>
            <person name="Simmonds M.N."/>
            <person name="Squares R."/>
            <person name="Squares S."/>
            <person name="Stevens K."/>
            <person name="Taylor K."/>
            <person name="Taylor R.G."/>
            <person name="Tivey A."/>
            <person name="Walsh S.V."/>
            <person name="Warren T."/>
            <person name="Whitehead S."/>
            <person name="Woodward J.R."/>
            <person name="Volckaert G."/>
            <person name="Aert R."/>
            <person name="Robben J."/>
            <person name="Grymonprez B."/>
            <person name="Weltjens I."/>
            <person name="Vanstreels E."/>
            <person name="Rieger M."/>
            <person name="Schaefer M."/>
            <person name="Mueller-Auer S."/>
            <person name="Gabel C."/>
            <person name="Fuchs M."/>
            <person name="Duesterhoeft A."/>
            <person name="Fritzc C."/>
            <person name="Holzer E."/>
            <person name="Moestl D."/>
            <person name="Hilbert H."/>
            <person name="Borzym K."/>
            <person name="Langer I."/>
            <person name="Beck A."/>
            <person name="Lehrach H."/>
            <person name="Reinhardt R."/>
            <person name="Pohl T.M."/>
            <person name="Eger P."/>
            <person name="Zimmermann W."/>
            <person name="Wedler H."/>
            <person name="Wambutt R."/>
            <person name="Purnelle B."/>
            <person name="Goffeau A."/>
            <person name="Cadieu E."/>
            <person name="Dreano S."/>
            <person name="Gloux S."/>
            <person name="Lelaure V."/>
            <person name="Mottier S."/>
            <person name="Galibert F."/>
            <person name="Aves S.J."/>
            <person name="Xiang Z."/>
            <person name="Hunt C."/>
            <person name="Moore K."/>
            <person name="Hurst S.M."/>
            <person name="Lucas M."/>
            <person name="Rochet M."/>
            <person name="Gaillardin C."/>
            <person name="Tallada V.A."/>
            <person name="Garzon A."/>
            <person name="Thode G."/>
            <person name="Daga R.R."/>
            <person name="Cruzado L."/>
            <person name="Jimenez J."/>
            <person name="Sanchez M."/>
            <person name="del Rey F."/>
            <person name="Benito J."/>
            <person name="Dominguez A."/>
            <person name="Revuelta J.L."/>
            <person name="Moreno S."/>
            <person name="Armstrong J."/>
            <person name="Forsburg S.L."/>
            <person name="Cerutti L."/>
            <person name="Lowe T."/>
            <person name="McCombie W.R."/>
            <person name="Paulsen I."/>
            <person name="Potashkin J."/>
            <person name="Shpakovski G.V."/>
            <person name="Ussery D."/>
            <person name="Barrell B.G."/>
            <person name="Nurse P."/>
        </authorList>
    </citation>
    <scope>NUCLEOTIDE SEQUENCE [LARGE SCALE GENOMIC DNA]</scope>
    <source>
        <strain>972 / ATCC 24843</strain>
    </source>
</reference>
<reference key="2">
    <citation type="journal article" date="2008" name="J. Proteome Res.">
        <title>Phosphoproteome analysis of fission yeast.</title>
        <authorList>
            <person name="Wilson-Grady J.T."/>
            <person name="Villen J."/>
            <person name="Gygi S.P."/>
        </authorList>
    </citation>
    <scope>PHOSPHORYLATION [LARGE SCALE ANALYSIS] AT THR-25</scope>
    <scope>IDENTIFICATION BY MASS SPECTROMETRY</scope>
</reference>
<name>GCH1_SCHPO</name>
<feature type="chain" id="PRO_0000119488" description="GTP cyclohydrolase 1">
    <location>
        <begin position="1"/>
        <end position="235"/>
    </location>
</feature>
<feature type="region of interest" description="Disordered" evidence="2">
    <location>
        <begin position="1"/>
        <end position="27"/>
    </location>
</feature>
<feature type="compositionally biased region" description="Polar residues" evidence="2">
    <location>
        <begin position="18"/>
        <end position="27"/>
    </location>
</feature>
<feature type="binding site" evidence="1">
    <location>
        <position position="125"/>
    </location>
    <ligand>
        <name>Zn(2+)</name>
        <dbReference type="ChEBI" id="CHEBI:29105"/>
    </ligand>
</feature>
<feature type="binding site" evidence="1">
    <location>
        <position position="128"/>
    </location>
    <ligand>
        <name>Zn(2+)</name>
        <dbReference type="ChEBI" id="CHEBI:29105"/>
    </ligand>
</feature>
<feature type="binding site" evidence="1">
    <location>
        <position position="196"/>
    </location>
    <ligand>
        <name>Zn(2+)</name>
        <dbReference type="ChEBI" id="CHEBI:29105"/>
    </ligand>
</feature>
<feature type="modified residue" description="Phosphothreonine" evidence="3">
    <location>
        <position position="25"/>
    </location>
</feature>